<comment type="function">
    <text evidence="1">Produces ATP from ADP in the presence of a proton gradient across the membrane. The alpha chain is a regulatory subunit.</text>
</comment>
<comment type="catalytic activity">
    <reaction evidence="1">
        <text>ATP + H2O + 4 H(+)(in) = ADP + phosphate + 5 H(+)(out)</text>
        <dbReference type="Rhea" id="RHEA:57720"/>
        <dbReference type="ChEBI" id="CHEBI:15377"/>
        <dbReference type="ChEBI" id="CHEBI:15378"/>
        <dbReference type="ChEBI" id="CHEBI:30616"/>
        <dbReference type="ChEBI" id="CHEBI:43474"/>
        <dbReference type="ChEBI" id="CHEBI:456216"/>
        <dbReference type="EC" id="7.1.2.2"/>
    </reaction>
</comment>
<comment type="subunit">
    <text evidence="1">F-type ATPases have 2 components, CF(1) - the catalytic core - and CF(0) - the membrane proton channel. CF(1) has five subunits: alpha(3), beta(3), gamma(1), delta(1), epsilon(1). CF(0) has three main subunits: a(1), b(2) and c(9-12). The alpha and beta chains form an alternating ring which encloses part of the gamma chain. CF(1) is attached to CF(0) by a central stalk formed by the gamma and epsilon chains, while a peripheral stalk is formed by the delta and b chains.</text>
</comment>
<comment type="subcellular location">
    <subcellularLocation>
        <location evidence="1">Cell inner membrane</location>
        <topology evidence="1">Peripheral membrane protein</topology>
    </subcellularLocation>
</comment>
<comment type="similarity">
    <text evidence="1">Belongs to the ATPase alpha/beta chains family.</text>
</comment>
<evidence type="ECO:0000255" key="1">
    <source>
        <dbReference type="HAMAP-Rule" id="MF_01346"/>
    </source>
</evidence>
<protein>
    <recommendedName>
        <fullName evidence="1">ATP synthase subunit alpha</fullName>
        <ecNumber evidence="1">7.1.2.2</ecNumber>
    </recommendedName>
    <alternativeName>
        <fullName evidence="1">ATP synthase F1 sector subunit alpha</fullName>
    </alternativeName>
    <alternativeName>
        <fullName evidence="1">F-ATPase subunit alpha</fullName>
    </alternativeName>
</protein>
<keyword id="KW-0066">ATP synthesis</keyword>
<keyword id="KW-0067">ATP-binding</keyword>
<keyword id="KW-0997">Cell inner membrane</keyword>
<keyword id="KW-1003">Cell membrane</keyword>
<keyword id="KW-0139">CF(1)</keyword>
<keyword id="KW-0375">Hydrogen ion transport</keyword>
<keyword id="KW-0406">Ion transport</keyword>
<keyword id="KW-0472">Membrane</keyword>
<keyword id="KW-0547">Nucleotide-binding</keyword>
<keyword id="KW-1278">Translocase</keyword>
<keyword id="KW-0813">Transport</keyword>
<reference key="1">
    <citation type="submission" date="2006-09" db="EMBL/GenBank/DDBJ databases">
        <title>Complete sequence of chromosome 1 of Shewanella sp. ANA-3.</title>
        <authorList>
            <person name="Copeland A."/>
            <person name="Lucas S."/>
            <person name="Lapidus A."/>
            <person name="Barry K."/>
            <person name="Detter J.C."/>
            <person name="Glavina del Rio T."/>
            <person name="Hammon N."/>
            <person name="Israni S."/>
            <person name="Dalin E."/>
            <person name="Tice H."/>
            <person name="Pitluck S."/>
            <person name="Chertkov O."/>
            <person name="Brettin T."/>
            <person name="Bruce D."/>
            <person name="Han C."/>
            <person name="Tapia R."/>
            <person name="Gilna P."/>
            <person name="Schmutz J."/>
            <person name="Larimer F."/>
            <person name="Land M."/>
            <person name="Hauser L."/>
            <person name="Kyrpides N."/>
            <person name="Kim E."/>
            <person name="Newman D."/>
            <person name="Salticov C."/>
            <person name="Konstantinidis K."/>
            <person name="Klappenback J."/>
            <person name="Tiedje J."/>
            <person name="Richardson P."/>
        </authorList>
    </citation>
    <scope>NUCLEOTIDE SEQUENCE [LARGE SCALE GENOMIC DNA]</scope>
    <source>
        <strain>ANA-3</strain>
    </source>
</reference>
<sequence>MQLNSTEISDLIKQRIEQFEVVSESRNEGTIVAVSDGIIRIHGLADVMQGEMIELPGSRFAIALNLERDSVGAVVMGPYADLAEGVKVKTTGRILEVPVGRGLLGRVVNTLGEPIDGKGAIDNDGFSPVEVIAPGVIERKSVDQPVQTGYKAVDAMIPIGRGQRELIIGDRQTGKTAMAIDAIINQRDSGIKCVYVAVGQKASTIANVVRKLEEHGALANTIVVVATASEAAALQYLAPYSGCAMGEYFRDRGEDALIVYDDLSKQAVAYRQISLLLKRPPGREAYPGDVFYLHSRLLERASRVNEEYVEKFTKGAVTGQTGSLTALPIIETQAGDVSAFVPTNVISITDGQIFLETDLFNSGLRPAVNPGISVSRVGGAAQTKIIKKLSGGIRTALAQYRELAAFSQFASDLDDATRAQLEHGVRVTELMKQKQYAPMSVAAQAVSIFAAEKGYLKGVELKKVGDFEAALLSYMNSEHAALIKLINETGDYNADIEAELKAGLDKFVATQTW</sequence>
<gene>
    <name evidence="1" type="primary">atpA</name>
    <name type="ordered locus">Shewana3_4132</name>
</gene>
<proteinExistence type="inferred from homology"/>
<accession>A0L2T0</accession>
<feature type="chain" id="PRO_0000302699" description="ATP synthase subunit alpha">
    <location>
        <begin position="1"/>
        <end position="513"/>
    </location>
</feature>
<feature type="binding site" evidence="1">
    <location>
        <begin position="169"/>
        <end position="176"/>
    </location>
    <ligand>
        <name>ATP</name>
        <dbReference type="ChEBI" id="CHEBI:30616"/>
    </ligand>
</feature>
<feature type="site" description="Required for activity" evidence="1">
    <location>
        <position position="373"/>
    </location>
</feature>
<organism>
    <name type="scientific">Shewanella sp. (strain ANA-3)</name>
    <dbReference type="NCBI Taxonomy" id="94122"/>
    <lineage>
        <taxon>Bacteria</taxon>
        <taxon>Pseudomonadati</taxon>
        <taxon>Pseudomonadota</taxon>
        <taxon>Gammaproteobacteria</taxon>
        <taxon>Alteromonadales</taxon>
        <taxon>Shewanellaceae</taxon>
        <taxon>Shewanella</taxon>
    </lineage>
</organism>
<name>ATPA_SHESA</name>
<dbReference type="EC" id="7.1.2.2" evidence="1"/>
<dbReference type="EMBL" id="CP000469">
    <property type="protein sequence ID" value="ABK50349.1"/>
    <property type="molecule type" value="Genomic_DNA"/>
</dbReference>
<dbReference type="RefSeq" id="WP_011718834.1">
    <property type="nucleotide sequence ID" value="NC_008577.1"/>
</dbReference>
<dbReference type="SMR" id="A0L2T0"/>
<dbReference type="STRING" id="94122.Shewana3_4132"/>
<dbReference type="GeneID" id="94725960"/>
<dbReference type="KEGG" id="shn:Shewana3_4132"/>
<dbReference type="eggNOG" id="COG0056">
    <property type="taxonomic scope" value="Bacteria"/>
</dbReference>
<dbReference type="HOGENOM" id="CLU_010091_2_1_6"/>
<dbReference type="OrthoDB" id="9803053at2"/>
<dbReference type="Proteomes" id="UP000002589">
    <property type="component" value="Chromosome"/>
</dbReference>
<dbReference type="GO" id="GO:0005886">
    <property type="term" value="C:plasma membrane"/>
    <property type="evidence" value="ECO:0007669"/>
    <property type="project" value="UniProtKB-SubCell"/>
</dbReference>
<dbReference type="GO" id="GO:0045259">
    <property type="term" value="C:proton-transporting ATP synthase complex"/>
    <property type="evidence" value="ECO:0007669"/>
    <property type="project" value="UniProtKB-KW"/>
</dbReference>
<dbReference type="GO" id="GO:0043531">
    <property type="term" value="F:ADP binding"/>
    <property type="evidence" value="ECO:0007669"/>
    <property type="project" value="TreeGrafter"/>
</dbReference>
<dbReference type="GO" id="GO:0005524">
    <property type="term" value="F:ATP binding"/>
    <property type="evidence" value="ECO:0007669"/>
    <property type="project" value="UniProtKB-UniRule"/>
</dbReference>
<dbReference type="GO" id="GO:0046933">
    <property type="term" value="F:proton-transporting ATP synthase activity, rotational mechanism"/>
    <property type="evidence" value="ECO:0007669"/>
    <property type="project" value="UniProtKB-UniRule"/>
</dbReference>
<dbReference type="CDD" id="cd18113">
    <property type="entry name" value="ATP-synt_F1_alpha_C"/>
    <property type="match status" value="1"/>
</dbReference>
<dbReference type="CDD" id="cd18116">
    <property type="entry name" value="ATP-synt_F1_alpha_N"/>
    <property type="match status" value="1"/>
</dbReference>
<dbReference type="CDD" id="cd01132">
    <property type="entry name" value="F1-ATPase_alpha_CD"/>
    <property type="match status" value="1"/>
</dbReference>
<dbReference type="FunFam" id="1.20.150.20:FF:000001">
    <property type="entry name" value="ATP synthase subunit alpha"/>
    <property type="match status" value="1"/>
</dbReference>
<dbReference type="FunFam" id="2.40.30.20:FF:000001">
    <property type="entry name" value="ATP synthase subunit alpha"/>
    <property type="match status" value="1"/>
</dbReference>
<dbReference type="FunFam" id="3.40.50.300:FF:000002">
    <property type="entry name" value="ATP synthase subunit alpha"/>
    <property type="match status" value="1"/>
</dbReference>
<dbReference type="Gene3D" id="2.40.30.20">
    <property type="match status" value="1"/>
</dbReference>
<dbReference type="Gene3D" id="1.20.150.20">
    <property type="entry name" value="ATP synthase alpha/beta chain, C-terminal domain"/>
    <property type="match status" value="1"/>
</dbReference>
<dbReference type="Gene3D" id="3.40.50.300">
    <property type="entry name" value="P-loop containing nucleotide triphosphate hydrolases"/>
    <property type="match status" value="1"/>
</dbReference>
<dbReference type="HAMAP" id="MF_01346">
    <property type="entry name" value="ATP_synth_alpha_bact"/>
    <property type="match status" value="1"/>
</dbReference>
<dbReference type="InterPro" id="IPR023366">
    <property type="entry name" value="ATP_synth_asu-like_sf"/>
</dbReference>
<dbReference type="InterPro" id="IPR000793">
    <property type="entry name" value="ATP_synth_asu_C"/>
</dbReference>
<dbReference type="InterPro" id="IPR038376">
    <property type="entry name" value="ATP_synth_asu_C_sf"/>
</dbReference>
<dbReference type="InterPro" id="IPR033732">
    <property type="entry name" value="ATP_synth_F1_a_nt-bd_dom"/>
</dbReference>
<dbReference type="InterPro" id="IPR005294">
    <property type="entry name" value="ATP_synth_F1_asu"/>
</dbReference>
<dbReference type="InterPro" id="IPR020003">
    <property type="entry name" value="ATPase_a/bsu_AS"/>
</dbReference>
<dbReference type="InterPro" id="IPR004100">
    <property type="entry name" value="ATPase_F1/V1/A1_a/bsu_N"/>
</dbReference>
<dbReference type="InterPro" id="IPR036121">
    <property type="entry name" value="ATPase_F1/V1/A1_a/bsu_N_sf"/>
</dbReference>
<dbReference type="InterPro" id="IPR000194">
    <property type="entry name" value="ATPase_F1/V1/A1_a/bsu_nucl-bd"/>
</dbReference>
<dbReference type="InterPro" id="IPR027417">
    <property type="entry name" value="P-loop_NTPase"/>
</dbReference>
<dbReference type="NCBIfam" id="TIGR00962">
    <property type="entry name" value="atpA"/>
    <property type="match status" value="1"/>
</dbReference>
<dbReference type="NCBIfam" id="NF009884">
    <property type="entry name" value="PRK13343.1"/>
    <property type="match status" value="1"/>
</dbReference>
<dbReference type="PANTHER" id="PTHR48082">
    <property type="entry name" value="ATP SYNTHASE SUBUNIT ALPHA, MITOCHONDRIAL"/>
    <property type="match status" value="1"/>
</dbReference>
<dbReference type="PANTHER" id="PTHR48082:SF2">
    <property type="entry name" value="ATP SYNTHASE SUBUNIT ALPHA, MITOCHONDRIAL"/>
    <property type="match status" value="1"/>
</dbReference>
<dbReference type="Pfam" id="PF00006">
    <property type="entry name" value="ATP-synt_ab"/>
    <property type="match status" value="1"/>
</dbReference>
<dbReference type="Pfam" id="PF00306">
    <property type="entry name" value="ATP-synt_ab_C"/>
    <property type="match status" value="1"/>
</dbReference>
<dbReference type="Pfam" id="PF02874">
    <property type="entry name" value="ATP-synt_ab_N"/>
    <property type="match status" value="1"/>
</dbReference>
<dbReference type="SUPFAM" id="SSF47917">
    <property type="entry name" value="C-terminal domain of alpha and beta subunits of F1 ATP synthase"/>
    <property type="match status" value="1"/>
</dbReference>
<dbReference type="SUPFAM" id="SSF50615">
    <property type="entry name" value="N-terminal domain of alpha and beta subunits of F1 ATP synthase"/>
    <property type="match status" value="1"/>
</dbReference>
<dbReference type="SUPFAM" id="SSF52540">
    <property type="entry name" value="P-loop containing nucleoside triphosphate hydrolases"/>
    <property type="match status" value="1"/>
</dbReference>
<dbReference type="PROSITE" id="PS00152">
    <property type="entry name" value="ATPASE_ALPHA_BETA"/>
    <property type="match status" value="1"/>
</dbReference>